<comment type="function">
    <text evidence="1">Peptide chain release factor 2 directs the termination of translation in response to the peptide chain termination codons UGA and UAA.</text>
</comment>
<comment type="subcellular location">
    <subcellularLocation>
        <location evidence="1">Cytoplasm</location>
    </subcellularLocation>
</comment>
<comment type="PTM">
    <text evidence="1">Methylated by PrmC. Methylation increases the termination efficiency of RF2.</text>
</comment>
<comment type="similarity">
    <text evidence="1">Belongs to the prokaryotic/mitochondrial release factor family.</text>
</comment>
<reference key="1">
    <citation type="journal article" date="2011" name="J. Bacteriol.">
        <title>Complete genome and proteome of Acholeplasma laidlawii.</title>
        <authorList>
            <person name="Lazarev V.N."/>
            <person name="Levitskii S.A."/>
            <person name="Basovskii Y.I."/>
            <person name="Chukin M.M."/>
            <person name="Akopian T.A."/>
            <person name="Vereshchagin V.V."/>
            <person name="Kostrjukova E.S."/>
            <person name="Kovaleva G.Y."/>
            <person name="Kazanov M.D."/>
            <person name="Malko D.B."/>
            <person name="Vitreschak A.G."/>
            <person name="Sernova N.V."/>
            <person name="Gelfand M.S."/>
            <person name="Demina I.A."/>
            <person name="Serebryakova M.V."/>
            <person name="Galyamina M.A."/>
            <person name="Vtyurin N.N."/>
            <person name="Rogov S.I."/>
            <person name="Alexeev D.G."/>
            <person name="Ladygina V.G."/>
            <person name="Govorun V.M."/>
        </authorList>
    </citation>
    <scope>NUCLEOTIDE SEQUENCE [LARGE SCALE GENOMIC DNA]</scope>
    <source>
        <strain>PG-8A</strain>
    </source>
</reference>
<organism>
    <name type="scientific">Acholeplasma laidlawii (strain PG-8A)</name>
    <dbReference type="NCBI Taxonomy" id="441768"/>
    <lineage>
        <taxon>Bacteria</taxon>
        <taxon>Bacillati</taxon>
        <taxon>Mycoplasmatota</taxon>
        <taxon>Mollicutes</taxon>
        <taxon>Acholeplasmatales</taxon>
        <taxon>Acholeplasmataceae</taxon>
        <taxon>Acholeplasma</taxon>
    </lineage>
</organism>
<keyword id="KW-0963">Cytoplasm</keyword>
<keyword id="KW-0488">Methylation</keyword>
<keyword id="KW-0648">Protein biosynthesis</keyword>
<keyword id="KW-1185">Reference proteome</keyword>
<protein>
    <recommendedName>
        <fullName evidence="1">Peptide chain release factor 2</fullName>
        <shortName evidence="1">RF-2</shortName>
    </recommendedName>
</protein>
<dbReference type="EMBL" id="CP000896">
    <property type="protein sequence ID" value="ABX80953.1"/>
    <property type="molecule type" value="Genomic_DNA"/>
</dbReference>
<dbReference type="RefSeq" id="WP_012242284.1">
    <property type="nucleotide sequence ID" value="NC_010163.1"/>
</dbReference>
<dbReference type="SMR" id="A9NF23"/>
<dbReference type="STRING" id="441768.ACL_0331"/>
<dbReference type="GeneID" id="41338516"/>
<dbReference type="KEGG" id="acl:ACL_0331"/>
<dbReference type="eggNOG" id="COG1186">
    <property type="taxonomic scope" value="Bacteria"/>
</dbReference>
<dbReference type="HOGENOM" id="CLU_036856_6_0_14"/>
<dbReference type="OrthoDB" id="9806673at2"/>
<dbReference type="Proteomes" id="UP000008558">
    <property type="component" value="Chromosome"/>
</dbReference>
<dbReference type="GO" id="GO:0005737">
    <property type="term" value="C:cytoplasm"/>
    <property type="evidence" value="ECO:0007669"/>
    <property type="project" value="UniProtKB-SubCell"/>
</dbReference>
<dbReference type="GO" id="GO:0016149">
    <property type="term" value="F:translation release factor activity, codon specific"/>
    <property type="evidence" value="ECO:0007669"/>
    <property type="project" value="UniProtKB-UniRule"/>
</dbReference>
<dbReference type="FunFam" id="3.30.160.20:FF:000004">
    <property type="entry name" value="Peptide chain release factor 1"/>
    <property type="match status" value="1"/>
</dbReference>
<dbReference type="Gene3D" id="3.30.160.20">
    <property type="match status" value="1"/>
</dbReference>
<dbReference type="Gene3D" id="3.30.70.1660">
    <property type="match status" value="1"/>
</dbReference>
<dbReference type="Gene3D" id="1.20.58.410">
    <property type="entry name" value="Release factor"/>
    <property type="match status" value="1"/>
</dbReference>
<dbReference type="HAMAP" id="MF_00094">
    <property type="entry name" value="Rel_fac_2"/>
    <property type="match status" value="1"/>
</dbReference>
<dbReference type="InterPro" id="IPR005139">
    <property type="entry name" value="PCRF"/>
</dbReference>
<dbReference type="InterPro" id="IPR000352">
    <property type="entry name" value="Pep_chain_release_fac_I"/>
</dbReference>
<dbReference type="InterPro" id="IPR045853">
    <property type="entry name" value="Pep_chain_release_fac_I_sf"/>
</dbReference>
<dbReference type="InterPro" id="IPR004374">
    <property type="entry name" value="PrfB"/>
</dbReference>
<dbReference type="NCBIfam" id="TIGR00020">
    <property type="entry name" value="prfB"/>
    <property type="match status" value="1"/>
</dbReference>
<dbReference type="PANTHER" id="PTHR43116:SF3">
    <property type="entry name" value="CLASS I PEPTIDE CHAIN RELEASE FACTOR"/>
    <property type="match status" value="1"/>
</dbReference>
<dbReference type="PANTHER" id="PTHR43116">
    <property type="entry name" value="PEPTIDE CHAIN RELEASE FACTOR 2"/>
    <property type="match status" value="1"/>
</dbReference>
<dbReference type="Pfam" id="PF03462">
    <property type="entry name" value="PCRF"/>
    <property type="match status" value="1"/>
</dbReference>
<dbReference type="Pfam" id="PF00472">
    <property type="entry name" value="RF-1"/>
    <property type="match status" value="1"/>
</dbReference>
<dbReference type="SMART" id="SM00937">
    <property type="entry name" value="PCRF"/>
    <property type="match status" value="1"/>
</dbReference>
<dbReference type="SUPFAM" id="SSF75620">
    <property type="entry name" value="Release factor"/>
    <property type="match status" value="1"/>
</dbReference>
<evidence type="ECO:0000255" key="1">
    <source>
        <dbReference type="HAMAP-Rule" id="MF_00094"/>
    </source>
</evidence>
<sequence>MEKYEVNKTLELFETKIKDLENALDLDAINNRLKEIEPIMANPNFWNDSNQAKKISQELNQLTEKKQTITSIQNQYEDALMWLEEAKEGTESWDILEAEIDSLQKKISEFEIEVLLNGEYDHNNAILELHPGAGGTESMDWCGILMRMYERFAGYKGYKVEILNYLAGEEAGVKSVTLRISGPYAYGNLKSERGVHRLVRISPFDSNKRRHTSFVSCDVAPEIDETSEVELKDDDIRMDTFQSSGAGGQSVNTTYSAVRLTHIPTGIVVNIQNERSQIKNKEAAMQILKSKLIQKELEEKQAKLNALKGEKSDIGWGSQIRSYVFQPYQMVKDHRTNYEVGNIQSVMDGDIDGFINAYLKSKAYE</sequence>
<accession>A9NF23</accession>
<feature type="chain" id="PRO_1000075522" description="Peptide chain release factor 2">
    <location>
        <begin position="1"/>
        <end position="365"/>
    </location>
</feature>
<feature type="modified residue" description="N5-methylglutamine" evidence="1">
    <location>
        <position position="249"/>
    </location>
</feature>
<gene>
    <name evidence="1" type="primary">prfB</name>
    <name type="ordered locus">ACL_0331</name>
</gene>
<name>RF2_ACHLI</name>
<proteinExistence type="inferred from homology"/>